<comment type="function">
    <text evidence="1">Protein-L-histidine N-tele-methyltransferase that specifically monomethylates RPL3, thereby regulating translation elongation. Histidine methylation of RPL3 regulates translation elongation by slowing ribosome traversal on tyrosine codons: slower elongation provides enough time for proper folding of synthesized proteins and prevents cellular aggregation of tyrosine-rich proteins.</text>
</comment>
<comment type="catalytic activity">
    <reaction evidence="1">
        <text>L-histidyl-[protein] + S-adenosyl-L-methionine = N(tele)-methyl-L-histidyl-[protein] + S-adenosyl-L-homocysteine + H(+)</text>
        <dbReference type="Rhea" id="RHEA:19369"/>
        <dbReference type="Rhea" id="RHEA-COMP:9745"/>
        <dbReference type="Rhea" id="RHEA-COMP:11600"/>
        <dbReference type="ChEBI" id="CHEBI:15378"/>
        <dbReference type="ChEBI" id="CHEBI:16367"/>
        <dbReference type="ChEBI" id="CHEBI:29979"/>
        <dbReference type="ChEBI" id="CHEBI:57856"/>
        <dbReference type="ChEBI" id="CHEBI:59789"/>
        <dbReference type="EC" id="2.1.1.85"/>
    </reaction>
    <physiologicalReaction direction="left-to-right" evidence="1">
        <dbReference type="Rhea" id="RHEA:19370"/>
    </physiologicalReaction>
</comment>
<comment type="subunit">
    <text evidence="1">Interacts with GRWD1 and members of the heat shock protein 90 and 70 families; these proteins may possibly be methylation substrates for the enzyme.</text>
</comment>
<comment type="subcellular location">
    <subcellularLocation>
        <location evidence="1">Cytoplasm</location>
        <location evidence="1">Cytosol</location>
    </subcellularLocation>
    <subcellularLocation>
        <location evidence="1">Nucleus</location>
    </subcellularLocation>
    <subcellularLocation>
        <location evidence="1">Nucleus</location>
        <location evidence="1">Nucleolus</location>
    </subcellularLocation>
</comment>
<comment type="PTM">
    <text evidence="1">Monomethylated at His-154 through automethylation. Automethylation at His-154 positively regulates the methyltransferase activity toward RPL3. Probably methylated on other residues.</text>
</comment>
<comment type="similarity">
    <text evidence="3">Belongs to the methyltransferase superfamily. METTL18 family.</text>
</comment>
<feature type="chain" id="PRO_0000247198" description="Histidine protein methyltransferase 1 homolog">
    <location>
        <begin position="1"/>
        <end position="373"/>
    </location>
</feature>
<feature type="region of interest" description="Disordered" evidence="2">
    <location>
        <begin position="30"/>
        <end position="52"/>
    </location>
</feature>
<feature type="region of interest" description="Disordered" evidence="2">
    <location>
        <begin position="64"/>
        <end position="94"/>
    </location>
</feature>
<feature type="short sequence motif" description="Nuclear localization signal" evidence="1">
    <location>
        <begin position="247"/>
        <end position="253"/>
    </location>
</feature>
<feature type="compositionally biased region" description="Basic and acidic residues" evidence="2">
    <location>
        <begin position="30"/>
        <end position="42"/>
    </location>
</feature>
<feature type="compositionally biased region" description="Polar residues" evidence="2">
    <location>
        <begin position="70"/>
        <end position="88"/>
    </location>
</feature>
<feature type="binding site" evidence="1">
    <location>
        <begin position="168"/>
        <end position="172"/>
    </location>
    <ligand>
        <name>S-adenosyl-L-methionine</name>
        <dbReference type="ChEBI" id="CHEBI:59789"/>
    </ligand>
</feature>
<feature type="binding site" evidence="1">
    <location>
        <position position="195"/>
    </location>
    <ligand>
        <name>S-adenosyl-L-methionine</name>
        <dbReference type="ChEBI" id="CHEBI:59789"/>
    </ligand>
</feature>
<feature type="binding site" evidence="1">
    <location>
        <begin position="216"/>
        <end position="218"/>
    </location>
    <ligand>
        <name>S-adenosyl-L-methionine</name>
        <dbReference type="ChEBI" id="CHEBI:59789"/>
    </ligand>
</feature>
<feature type="binding site" evidence="1">
    <location>
        <begin position="269"/>
        <end position="271"/>
    </location>
    <ligand>
        <name>S-adenosyl-L-methionine</name>
        <dbReference type="ChEBI" id="CHEBI:59789"/>
    </ligand>
</feature>
<feature type="binding site" evidence="1">
    <location>
        <position position="294"/>
    </location>
    <ligand>
        <name>S-adenosyl-L-methionine</name>
        <dbReference type="ChEBI" id="CHEBI:59789"/>
    </ligand>
</feature>
<feature type="modified residue" description="Phosphoserine" evidence="1">
    <location>
        <position position="72"/>
    </location>
</feature>
<feature type="modified residue" description="Phosphoserine" evidence="1">
    <location>
        <position position="77"/>
    </location>
</feature>
<feature type="modified residue" description="Tele-methylhistidine" evidence="1">
    <location>
        <position position="154"/>
    </location>
</feature>
<accession>Q2KIJ2</accession>
<proteinExistence type="evidence at transcript level"/>
<reference key="1">
    <citation type="submission" date="2006-01" db="EMBL/GenBank/DDBJ databases">
        <authorList>
            <consortium name="NIH - Mammalian Gene Collection (MGC) project"/>
        </authorList>
    </citation>
    <scope>NUCLEOTIDE SEQUENCE [LARGE SCALE MRNA]</scope>
    <source>
        <strain>Hereford</strain>
        <tissue>Hypothalamus</tissue>
    </source>
</reference>
<keyword id="KW-0963">Cytoplasm</keyword>
<keyword id="KW-0488">Methylation</keyword>
<keyword id="KW-0489">Methyltransferase</keyword>
<keyword id="KW-0539">Nucleus</keyword>
<keyword id="KW-0597">Phosphoprotein</keyword>
<keyword id="KW-1185">Reference proteome</keyword>
<keyword id="KW-0949">S-adenosyl-L-methionine</keyword>
<keyword id="KW-0808">Transferase</keyword>
<protein>
    <recommendedName>
        <fullName evidence="3">Histidine protein methyltransferase 1 homolog</fullName>
        <ecNumber evidence="1">2.1.1.85</ecNumber>
    </recommendedName>
    <alternativeName>
        <fullName>Methyltransferase-like protein 18</fullName>
    </alternativeName>
</protein>
<name>MET18_BOVIN</name>
<dbReference type="EC" id="2.1.1.85" evidence="1"/>
<dbReference type="EMBL" id="BC112618">
    <property type="protein sequence ID" value="AAI12619.1"/>
    <property type="molecule type" value="mRNA"/>
</dbReference>
<dbReference type="RefSeq" id="NP_001073825.1">
    <property type="nucleotide sequence ID" value="NM_001080356.2"/>
</dbReference>
<dbReference type="RefSeq" id="XP_005216978.1">
    <property type="nucleotide sequence ID" value="XM_005216921.1"/>
</dbReference>
<dbReference type="RefSeq" id="XP_005216979.1">
    <property type="nucleotide sequence ID" value="XM_005216922.3"/>
</dbReference>
<dbReference type="SMR" id="Q2KIJ2"/>
<dbReference type="FunCoup" id="Q2KIJ2">
    <property type="interactions" value="3612"/>
</dbReference>
<dbReference type="STRING" id="9913.ENSBTAP00000028878"/>
<dbReference type="PaxDb" id="9913-ENSBTAP00000028878"/>
<dbReference type="GeneID" id="783955"/>
<dbReference type="KEGG" id="bta:783955"/>
<dbReference type="CTD" id="92342"/>
<dbReference type="eggNOG" id="KOG2920">
    <property type="taxonomic scope" value="Eukaryota"/>
</dbReference>
<dbReference type="HOGENOM" id="CLU_038704_0_1_1"/>
<dbReference type="InParanoid" id="Q2KIJ2"/>
<dbReference type="OrthoDB" id="1723750at2759"/>
<dbReference type="TreeFam" id="TF320884"/>
<dbReference type="Proteomes" id="UP000009136">
    <property type="component" value="Unplaced"/>
</dbReference>
<dbReference type="GO" id="GO:0005829">
    <property type="term" value="C:cytosol"/>
    <property type="evidence" value="ECO:0000250"/>
    <property type="project" value="UniProtKB"/>
</dbReference>
<dbReference type="GO" id="GO:0005730">
    <property type="term" value="C:nucleolus"/>
    <property type="evidence" value="ECO:0000250"/>
    <property type="project" value="UniProtKB"/>
</dbReference>
<dbReference type="GO" id="GO:0005634">
    <property type="term" value="C:nucleus"/>
    <property type="evidence" value="ECO:0000250"/>
    <property type="project" value="UniProtKB"/>
</dbReference>
<dbReference type="GO" id="GO:0018064">
    <property type="term" value="F:protein-L-histidine N-tele-methyltransferase activity"/>
    <property type="evidence" value="ECO:0000250"/>
    <property type="project" value="UniProtKB"/>
</dbReference>
<dbReference type="GO" id="GO:0018026">
    <property type="term" value="P:peptidyl-lysine monomethylation"/>
    <property type="evidence" value="ECO:0000250"/>
    <property type="project" value="UniProtKB"/>
</dbReference>
<dbReference type="GO" id="GO:0090069">
    <property type="term" value="P:regulation of ribosome biogenesis"/>
    <property type="evidence" value="ECO:0000250"/>
    <property type="project" value="UniProtKB"/>
</dbReference>
<dbReference type="GO" id="GO:2000232">
    <property type="term" value="P:regulation of rRNA processing"/>
    <property type="evidence" value="ECO:0000250"/>
    <property type="project" value="UniProtKB"/>
</dbReference>
<dbReference type="GO" id="GO:0006417">
    <property type="term" value="P:regulation of translation"/>
    <property type="evidence" value="ECO:0000250"/>
    <property type="project" value="UniProtKB"/>
</dbReference>
<dbReference type="GO" id="GO:0006448">
    <property type="term" value="P:regulation of translational elongation"/>
    <property type="evidence" value="ECO:0000250"/>
    <property type="project" value="UniProtKB"/>
</dbReference>
<dbReference type="CDD" id="cd02440">
    <property type="entry name" value="AdoMet_MTases"/>
    <property type="match status" value="1"/>
</dbReference>
<dbReference type="FunFam" id="3.40.50.150:FF:000268">
    <property type="entry name" value="Histidine protein methyltransferase 1 homolog"/>
    <property type="match status" value="1"/>
</dbReference>
<dbReference type="Gene3D" id="3.40.50.150">
    <property type="entry name" value="Vaccinia Virus protein VP39"/>
    <property type="match status" value="1"/>
</dbReference>
<dbReference type="InterPro" id="IPR019410">
    <property type="entry name" value="Methyltransf_16"/>
</dbReference>
<dbReference type="InterPro" id="IPR029063">
    <property type="entry name" value="SAM-dependent_MTases_sf"/>
</dbReference>
<dbReference type="PANTHER" id="PTHR14614">
    <property type="entry name" value="HEPATOCELLULAR CARCINOMA-ASSOCIATED ANTIGEN"/>
    <property type="match status" value="1"/>
</dbReference>
<dbReference type="PANTHER" id="PTHR14614:SF39">
    <property type="entry name" value="HISTIDINE PROTEIN METHYLTRANSFERASE 1 HOMOLOG"/>
    <property type="match status" value="1"/>
</dbReference>
<dbReference type="Pfam" id="PF10294">
    <property type="entry name" value="Methyltransf_16"/>
    <property type="match status" value="1"/>
</dbReference>
<dbReference type="Pfam" id="PF06325">
    <property type="entry name" value="PrmA"/>
    <property type="match status" value="1"/>
</dbReference>
<dbReference type="SUPFAM" id="SSF53335">
    <property type="entry name" value="S-adenosyl-L-methionine-dependent methyltransferases"/>
    <property type="match status" value="1"/>
</dbReference>
<evidence type="ECO:0000250" key="1">
    <source>
        <dbReference type="UniProtKB" id="O95568"/>
    </source>
</evidence>
<evidence type="ECO:0000256" key="2">
    <source>
        <dbReference type="SAM" id="MobiDB-lite"/>
    </source>
</evidence>
<evidence type="ECO:0000305" key="3"/>
<gene>
    <name type="primary">METTL18</name>
</gene>
<sequence length="373" mass="42101">MTFQFNFTIEDHLEDELTSLGDGALALHSSKESLVSERQKGTHRDKKCSTEQSDLLQDHLWEHKSERNEAPSQDPDSSFGAANSSSNLEPHEEKPCLKVAKEHAVPKDLKKVLENKVTETLPGLQHVNISIMKTTLLKENFPGENIISKSFSSHSDLISGVYEGGLKIWECTFDLLAYLTKAKVKFAGKKVLDLGCGSGLLGIMALKGGAKEIHFQDYNSVVIDEVTLPNVVANSTLEDEENDVNEPDVKRLRRSTVAQELCKCRFFSGEWSEFCKLVLSSEKLFEKYDLILTSETIYNPDYYVPLHQTFLRLLDKNGQVLLASKVHYFGVGGGTHLFQKFVEERNVFETRTLEIIDEGLKRCLIEMTFKYPT</sequence>
<organism>
    <name type="scientific">Bos taurus</name>
    <name type="common">Bovine</name>
    <dbReference type="NCBI Taxonomy" id="9913"/>
    <lineage>
        <taxon>Eukaryota</taxon>
        <taxon>Metazoa</taxon>
        <taxon>Chordata</taxon>
        <taxon>Craniata</taxon>
        <taxon>Vertebrata</taxon>
        <taxon>Euteleostomi</taxon>
        <taxon>Mammalia</taxon>
        <taxon>Eutheria</taxon>
        <taxon>Laurasiatheria</taxon>
        <taxon>Artiodactyla</taxon>
        <taxon>Ruminantia</taxon>
        <taxon>Pecora</taxon>
        <taxon>Bovidae</taxon>
        <taxon>Bovinae</taxon>
        <taxon>Bos</taxon>
    </lineage>
</organism>